<accession>A9R5U3</accession>
<sequence>MNLNATILGQAIAFVLFVIFCMKYVWPPIMAAIEKRQQEIADGLSSAERAKKDLDLAQANATDQLKKAKAEAQVIIEQASKRKAQILDEAKAEAEQERNKIVAQAQAEIDAERKRAREELRKQVAMLAIAGAEKIIERSVDEAANSDIVDKLVAEL</sequence>
<gene>
    <name evidence="1" type="primary">atpF</name>
    <name type="ordered locus">YpAngola_A4206</name>
</gene>
<dbReference type="EMBL" id="CP000901">
    <property type="protein sequence ID" value="ABX86050.1"/>
    <property type="molecule type" value="Genomic_DNA"/>
</dbReference>
<dbReference type="RefSeq" id="WP_002220762.1">
    <property type="nucleotide sequence ID" value="NZ_CP009935.1"/>
</dbReference>
<dbReference type="SMR" id="A9R5U3"/>
<dbReference type="GeneID" id="57974599"/>
<dbReference type="KEGG" id="ypg:YpAngola_A4206"/>
<dbReference type="PATRIC" id="fig|349746.12.peg.943"/>
<dbReference type="GO" id="GO:0005886">
    <property type="term" value="C:plasma membrane"/>
    <property type="evidence" value="ECO:0007669"/>
    <property type="project" value="UniProtKB-SubCell"/>
</dbReference>
<dbReference type="GO" id="GO:0045259">
    <property type="term" value="C:proton-transporting ATP synthase complex"/>
    <property type="evidence" value="ECO:0007669"/>
    <property type="project" value="UniProtKB-KW"/>
</dbReference>
<dbReference type="GO" id="GO:0046933">
    <property type="term" value="F:proton-transporting ATP synthase activity, rotational mechanism"/>
    <property type="evidence" value="ECO:0007669"/>
    <property type="project" value="UniProtKB-UniRule"/>
</dbReference>
<dbReference type="GO" id="GO:0046961">
    <property type="term" value="F:proton-transporting ATPase activity, rotational mechanism"/>
    <property type="evidence" value="ECO:0007669"/>
    <property type="project" value="TreeGrafter"/>
</dbReference>
<dbReference type="CDD" id="cd06503">
    <property type="entry name" value="ATP-synt_Fo_b"/>
    <property type="match status" value="1"/>
</dbReference>
<dbReference type="FunFam" id="1.20.5.620:FF:000001">
    <property type="entry name" value="ATP synthase subunit b"/>
    <property type="match status" value="1"/>
</dbReference>
<dbReference type="Gene3D" id="1.20.5.620">
    <property type="entry name" value="F1F0 ATP synthase subunit B, membrane domain"/>
    <property type="match status" value="1"/>
</dbReference>
<dbReference type="HAMAP" id="MF_01398">
    <property type="entry name" value="ATP_synth_b_bprime"/>
    <property type="match status" value="1"/>
</dbReference>
<dbReference type="InterPro" id="IPR028987">
    <property type="entry name" value="ATP_synth_B-like_membr_sf"/>
</dbReference>
<dbReference type="InterPro" id="IPR002146">
    <property type="entry name" value="ATP_synth_b/b'su_bac/chlpt"/>
</dbReference>
<dbReference type="InterPro" id="IPR005864">
    <property type="entry name" value="ATP_synth_F0_bsu_bac"/>
</dbReference>
<dbReference type="InterPro" id="IPR050059">
    <property type="entry name" value="ATP_synthase_B_chain"/>
</dbReference>
<dbReference type="NCBIfam" id="TIGR01144">
    <property type="entry name" value="ATP_synt_b"/>
    <property type="match status" value="1"/>
</dbReference>
<dbReference type="NCBIfam" id="NF004411">
    <property type="entry name" value="PRK05759.1-2"/>
    <property type="match status" value="1"/>
</dbReference>
<dbReference type="NCBIfam" id="NF004413">
    <property type="entry name" value="PRK05759.1-4"/>
    <property type="match status" value="1"/>
</dbReference>
<dbReference type="PANTHER" id="PTHR33445:SF1">
    <property type="entry name" value="ATP SYNTHASE SUBUNIT B"/>
    <property type="match status" value="1"/>
</dbReference>
<dbReference type="PANTHER" id="PTHR33445">
    <property type="entry name" value="ATP SYNTHASE SUBUNIT B', CHLOROPLASTIC"/>
    <property type="match status" value="1"/>
</dbReference>
<dbReference type="Pfam" id="PF00430">
    <property type="entry name" value="ATP-synt_B"/>
    <property type="match status" value="1"/>
</dbReference>
<dbReference type="SUPFAM" id="SSF81573">
    <property type="entry name" value="F1F0 ATP synthase subunit B, membrane domain"/>
    <property type="match status" value="1"/>
</dbReference>
<name>ATPF_YERPG</name>
<reference key="1">
    <citation type="journal article" date="2010" name="J. Bacteriol.">
        <title>Genome sequence of the deep-rooted Yersinia pestis strain Angola reveals new insights into the evolution and pangenome of the plague bacterium.</title>
        <authorList>
            <person name="Eppinger M."/>
            <person name="Worsham P.L."/>
            <person name="Nikolich M.P."/>
            <person name="Riley D.R."/>
            <person name="Sebastian Y."/>
            <person name="Mou S."/>
            <person name="Achtman M."/>
            <person name="Lindler L.E."/>
            <person name="Ravel J."/>
        </authorList>
    </citation>
    <scope>NUCLEOTIDE SEQUENCE [LARGE SCALE GENOMIC DNA]</scope>
    <source>
        <strain>Angola</strain>
    </source>
</reference>
<feature type="chain" id="PRO_0000368880" description="ATP synthase subunit b">
    <location>
        <begin position="1"/>
        <end position="156"/>
    </location>
</feature>
<feature type="transmembrane region" description="Helical" evidence="1">
    <location>
        <begin position="11"/>
        <end position="31"/>
    </location>
</feature>
<comment type="function">
    <text evidence="1">F(1)F(0) ATP synthase produces ATP from ADP in the presence of a proton or sodium gradient. F-type ATPases consist of two structural domains, F(1) containing the extramembraneous catalytic core and F(0) containing the membrane proton channel, linked together by a central stalk and a peripheral stalk. During catalysis, ATP synthesis in the catalytic domain of F(1) is coupled via a rotary mechanism of the central stalk subunits to proton translocation.</text>
</comment>
<comment type="function">
    <text evidence="1">Component of the F(0) channel, it forms part of the peripheral stalk, linking F(1) to F(0).</text>
</comment>
<comment type="subunit">
    <text evidence="1">F-type ATPases have 2 components, F(1) - the catalytic core - and F(0) - the membrane proton channel. F(1) has five subunits: alpha(3), beta(3), gamma(1), delta(1), epsilon(1). F(0) has three main subunits: a(1), b(2) and c(10-14). The alpha and beta chains form an alternating ring which encloses part of the gamma chain. F(1) is attached to F(0) by a central stalk formed by the gamma and epsilon chains, while a peripheral stalk is formed by the delta and b chains.</text>
</comment>
<comment type="subcellular location">
    <subcellularLocation>
        <location evidence="1">Cell inner membrane</location>
        <topology evidence="1">Single-pass membrane protein</topology>
    </subcellularLocation>
</comment>
<comment type="similarity">
    <text evidence="1">Belongs to the ATPase B chain family.</text>
</comment>
<protein>
    <recommendedName>
        <fullName evidence="1">ATP synthase subunit b</fullName>
    </recommendedName>
    <alternativeName>
        <fullName evidence="1">ATP synthase F(0) sector subunit b</fullName>
    </alternativeName>
    <alternativeName>
        <fullName evidence="1">ATPase subunit I</fullName>
    </alternativeName>
    <alternativeName>
        <fullName evidence="1">F-type ATPase subunit b</fullName>
        <shortName evidence="1">F-ATPase subunit b</shortName>
    </alternativeName>
</protein>
<evidence type="ECO:0000255" key="1">
    <source>
        <dbReference type="HAMAP-Rule" id="MF_01398"/>
    </source>
</evidence>
<organism>
    <name type="scientific">Yersinia pestis bv. Antiqua (strain Angola)</name>
    <dbReference type="NCBI Taxonomy" id="349746"/>
    <lineage>
        <taxon>Bacteria</taxon>
        <taxon>Pseudomonadati</taxon>
        <taxon>Pseudomonadota</taxon>
        <taxon>Gammaproteobacteria</taxon>
        <taxon>Enterobacterales</taxon>
        <taxon>Yersiniaceae</taxon>
        <taxon>Yersinia</taxon>
    </lineage>
</organism>
<proteinExistence type="inferred from homology"/>
<keyword id="KW-0066">ATP synthesis</keyword>
<keyword id="KW-0997">Cell inner membrane</keyword>
<keyword id="KW-1003">Cell membrane</keyword>
<keyword id="KW-0138">CF(0)</keyword>
<keyword id="KW-0375">Hydrogen ion transport</keyword>
<keyword id="KW-0406">Ion transport</keyword>
<keyword id="KW-0472">Membrane</keyword>
<keyword id="KW-0812">Transmembrane</keyword>
<keyword id="KW-1133">Transmembrane helix</keyword>
<keyword id="KW-0813">Transport</keyword>